<feature type="chain" id="PRO_0000229418" description="GMP synthase [glutamine-hydrolyzing]">
    <location>
        <begin position="1"/>
        <end position="525"/>
    </location>
</feature>
<feature type="domain" description="Glutamine amidotransferase type-1" evidence="1">
    <location>
        <begin position="9"/>
        <end position="207"/>
    </location>
</feature>
<feature type="domain" description="GMPS ATP-PPase" evidence="1">
    <location>
        <begin position="208"/>
        <end position="400"/>
    </location>
</feature>
<feature type="active site" description="Nucleophile" evidence="1">
    <location>
        <position position="86"/>
    </location>
</feature>
<feature type="active site" evidence="1">
    <location>
        <position position="181"/>
    </location>
</feature>
<feature type="active site" evidence="1">
    <location>
        <position position="183"/>
    </location>
</feature>
<feature type="binding site" evidence="1">
    <location>
        <begin position="235"/>
        <end position="241"/>
    </location>
    <ligand>
        <name>ATP</name>
        <dbReference type="ChEBI" id="CHEBI:30616"/>
    </ligand>
</feature>
<organism>
    <name type="scientific">Colwellia psychrerythraea (strain 34H / ATCC BAA-681)</name>
    <name type="common">Vibrio psychroerythus</name>
    <dbReference type="NCBI Taxonomy" id="167879"/>
    <lineage>
        <taxon>Bacteria</taxon>
        <taxon>Pseudomonadati</taxon>
        <taxon>Pseudomonadota</taxon>
        <taxon>Gammaproteobacteria</taxon>
        <taxon>Alteromonadales</taxon>
        <taxon>Colwelliaceae</taxon>
        <taxon>Colwellia</taxon>
    </lineage>
</organism>
<evidence type="ECO:0000255" key="1">
    <source>
        <dbReference type="HAMAP-Rule" id="MF_00344"/>
    </source>
</evidence>
<comment type="function">
    <text evidence="1">Catalyzes the synthesis of GMP from XMP.</text>
</comment>
<comment type="catalytic activity">
    <reaction evidence="1">
        <text>XMP + L-glutamine + ATP + H2O = GMP + L-glutamate + AMP + diphosphate + 2 H(+)</text>
        <dbReference type="Rhea" id="RHEA:11680"/>
        <dbReference type="ChEBI" id="CHEBI:15377"/>
        <dbReference type="ChEBI" id="CHEBI:15378"/>
        <dbReference type="ChEBI" id="CHEBI:29985"/>
        <dbReference type="ChEBI" id="CHEBI:30616"/>
        <dbReference type="ChEBI" id="CHEBI:33019"/>
        <dbReference type="ChEBI" id="CHEBI:57464"/>
        <dbReference type="ChEBI" id="CHEBI:58115"/>
        <dbReference type="ChEBI" id="CHEBI:58359"/>
        <dbReference type="ChEBI" id="CHEBI:456215"/>
        <dbReference type="EC" id="6.3.5.2"/>
    </reaction>
</comment>
<comment type="pathway">
    <text evidence="1">Purine metabolism; GMP biosynthesis; GMP from XMP (L-Gln route): step 1/1.</text>
</comment>
<comment type="subunit">
    <text evidence="1">Homodimer.</text>
</comment>
<accession>Q47WD1</accession>
<gene>
    <name evidence="1" type="primary">guaA</name>
    <name type="ordered locus">CPS_4241</name>
</gene>
<protein>
    <recommendedName>
        <fullName evidence="1">GMP synthase [glutamine-hydrolyzing]</fullName>
        <ecNumber evidence="1">6.3.5.2</ecNumber>
    </recommendedName>
    <alternativeName>
        <fullName evidence="1">GMP synthetase</fullName>
    </alternativeName>
    <alternativeName>
        <fullName evidence="1">Glutamine amidotransferase</fullName>
    </alternativeName>
</protein>
<name>GUAA_COLP3</name>
<sequence length="525" mass="58177">MSKDIHDHRILILDFGSQYTQLIARRVREIGVYCELWSWDVTEEQIKGFNPTGIILAGGPESVTEANSPRAPEYVYTAGVPVLGICYGMQTMAEQLGGGVESSSHKEFGYAAVELIAQSALFNKVEDSIGDNGNALLDVWMSHGDKVSAIPEGFVTVAQTASCAYGAMANEEKQFYGVQFHPEVTHTKQGSRILENFVVDICKCEKLWTSASIIDDAIAKMKAQVGDDEVILGLSGGVDSSVVAMLLHRAIGDKLTCVFVDNGLLRLDEGQQVMDMFGDHFGLNIIKIEAEDRFLNRLAGESEPEAKRKIIGNVFIDVFEEESNKLDNAKWLAQGTIYPDVIESAASATGKAHVIKSHHNVGGLPDYMKLGLVEPLRELFKDEVRKIGLELGLPYDMLYRHPFPGPGLGVRILGEVKKEYADLLRRADAIFIEELHKHDLYTKVSQAFTVFLPVKSVGVMGDARKYDWVVSLRCVETIDFMTARWSHLPYDFLGLVSNRIINEIDGISRVVYDISGKPPATIEWE</sequence>
<dbReference type="EC" id="6.3.5.2" evidence="1"/>
<dbReference type="EMBL" id="CP000083">
    <property type="protein sequence ID" value="AAZ25415.1"/>
    <property type="molecule type" value="Genomic_DNA"/>
</dbReference>
<dbReference type="RefSeq" id="WP_011044972.1">
    <property type="nucleotide sequence ID" value="NC_003910.7"/>
</dbReference>
<dbReference type="SMR" id="Q47WD1"/>
<dbReference type="STRING" id="167879.CPS_4241"/>
<dbReference type="MEROPS" id="C26.957"/>
<dbReference type="KEGG" id="cps:CPS_4241"/>
<dbReference type="eggNOG" id="COG0518">
    <property type="taxonomic scope" value="Bacteria"/>
</dbReference>
<dbReference type="eggNOG" id="COG0519">
    <property type="taxonomic scope" value="Bacteria"/>
</dbReference>
<dbReference type="HOGENOM" id="CLU_014340_0_5_6"/>
<dbReference type="UniPathway" id="UPA00189">
    <property type="reaction ID" value="UER00296"/>
</dbReference>
<dbReference type="Proteomes" id="UP000000547">
    <property type="component" value="Chromosome"/>
</dbReference>
<dbReference type="GO" id="GO:0005829">
    <property type="term" value="C:cytosol"/>
    <property type="evidence" value="ECO:0007669"/>
    <property type="project" value="TreeGrafter"/>
</dbReference>
<dbReference type="GO" id="GO:0005524">
    <property type="term" value="F:ATP binding"/>
    <property type="evidence" value="ECO:0007669"/>
    <property type="project" value="UniProtKB-UniRule"/>
</dbReference>
<dbReference type="GO" id="GO:0003921">
    <property type="term" value="F:GMP synthase activity"/>
    <property type="evidence" value="ECO:0007669"/>
    <property type="project" value="InterPro"/>
</dbReference>
<dbReference type="CDD" id="cd01742">
    <property type="entry name" value="GATase1_GMP_Synthase"/>
    <property type="match status" value="1"/>
</dbReference>
<dbReference type="CDD" id="cd01997">
    <property type="entry name" value="GMP_synthase_C"/>
    <property type="match status" value="1"/>
</dbReference>
<dbReference type="FunFam" id="3.30.300.10:FF:000002">
    <property type="entry name" value="GMP synthase [glutamine-hydrolyzing]"/>
    <property type="match status" value="1"/>
</dbReference>
<dbReference type="FunFam" id="3.40.50.620:FF:000001">
    <property type="entry name" value="GMP synthase [glutamine-hydrolyzing]"/>
    <property type="match status" value="1"/>
</dbReference>
<dbReference type="FunFam" id="3.40.50.880:FF:000001">
    <property type="entry name" value="GMP synthase [glutamine-hydrolyzing]"/>
    <property type="match status" value="1"/>
</dbReference>
<dbReference type="Gene3D" id="3.30.300.10">
    <property type="match status" value="1"/>
</dbReference>
<dbReference type="Gene3D" id="3.40.50.880">
    <property type="match status" value="1"/>
</dbReference>
<dbReference type="Gene3D" id="3.40.50.620">
    <property type="entry name" value="HUPs"/>
    <property type="match status" value="1"/>
</dbReference>
<dbReference type="HAMAP" id="MF_00344">
    <property type="entry name" value="GMP_synthase"/>
    <property type="match status" value="1"/>
</dbReference>
<dbReference type="InterPro" id="IPR029062">
    <property type="entry name" value="Class_I_gatase-like"/>
</dbReference>
<dbReference type="InterPro" id="IPR017926">
    <property type="entry name" value="GATASE"/>
</dbReference>
<dbReference type="InterPro" id="IPR001674">
    <property type="entry name" value="GMP_synth_C"/>
</dbReference>
<dbReference type="InterPro" id="IPR004739">
    <property type="entry name" value="GMP_synth_GATase"/>
</dbReference>
<dbReference type="InterPro" id="IPR022955">
    <property type="entry name" value="GMP_synthase"/>
</dbReference>
<dbReference type="InterPro" id="IPR025777">
    <property type="entry name" value="GMPS_ATP_PPase_dom"/>
</dbReference>
<dbReference type="InterPro" id="IPR022310">
    <property type="entry name" value="NAD/GMP_synthase"/>
</dbReference>
<dbReference type="InterPro" id="IPR014729">
    <property type="entry name" value="Rossmann-like_a/b/a_fold"/>
</dbReference>
<dbReference type="NCBIfam" id="TIGR00884">
    <property type="entry name" value="guaA_Cterm"/>
    <property type="match status" value="1"/>
</dbReference>
<dbReference type="NCBIfam" id="TIGR00888">
    <property type="entry name" value="guaA_Nterm"/>
    <property type="match status" value="1"/>
</dbReference>
<dbReference type="NCBIfam" id="NF000848">
    <property type="entry name" value="PRK00074.1"/>
    <property type="match status" value="1"/>
</dbReference>
<dbReference type="PANTHER" id="PTHR11922:SF2">
    <property type="entry name" value="GMP SYNTHASE [GLUTAMINE-HYDROLYZING]"/>
    <property type="match status" value="1"/>
</dbReference>
<dbReference type="PANTHER" id="PTHR11922">
    <property type="entry name" value="GMP SYNTHASE-RELATED"/>
    <property type="match status" value="1"/>
</dbReference>
<dbReference type="Pfam" id="PF00117">
    <property type="entry name" value="GATase"/>
    <property type="match status" value="1"/>
</dbReference>
<dbReference type="Pfam" id="PF00958">
    <property type="entry name" value="GMP_synt_C"/>
    <property type="match status" value="1"/>
</dbReference>
<dbReference type="Pfam" id="PF02540">
    <property type="entry name" value="NAD_synthase"/>
    <property type="match status" value="1"/>
</dbReference>
<dbReference type="PRINTS" id="PR00097">
    <property type="entry name" value="ANTSNTHASEII"/>
</dbReference>
<dbReference type="PRINTS" id="PR00096">
    <property type="entry name" value="GATASE"/>
</dbReference>
<dbReference type="SUPFAM" id="SSF52402">
    <property type="entry name" value="Adenine nucleotide alpha hydrolases-like"/>
    <property type="match status" value="1"/>
</dbReference>
<dbReference type="SUPFAM" id="SSF52317">
    <property type="entry name" value="Class I glutamine amidotransferase-like"/>
    <property type="match status" value="1"/>
</dbReference>
<dbReference type="SUPFAM" id="SSF54810">
    <property type="entry name" value="GMP synthetase C-terminal dimerisation domain"/>
    <property type="match status" value="1"/>
</dbReference>
<dbReference type="PROSITE" id="PS51273">
    <property type="entry name" value="GATASE_TYPE_1"/>
    <property type="match status" value="1"/>
</dbReference>
<dbReference type="PROSITE" id="PS51553">
    <property type="entry name" value="GMPS_ATP_PPASE"/>
    <property type="match status" value="1"/>
</dbReference>
<proteinExistence type="inferred from homology"/>
<reference key="1">
    <citation type="journal article" date="2005" name="Proc. Natl. Acad. Sci. U.S.A.">
        <title>The psychrophilic lifestyle as revealed by the genome sequence of Colwellia psychrerythraea 34H through genomic and proteomic analyses.</title>
        <authorList>
            <person name="Methe B.A."/>
            <person name="Nelson K.E."/>
            <person name="Deming J.W."/>
            <person name="Momen B."/>
            <person name="Melamud E."/>
            <person name="Zhang X."/>
            <person name="Moult J."/>
            <person name="Madupu R."/>
            <person name="Nelson W.C."/>
            <person name="Dodson R.J."/>
            <person name="Brinkac L.M."/>
            <person name="Daugherty S.C."/>
            <person name="Durkin A.S."/>
            <person name="DeBoy R.T."/>
            <person name="Kolonay J.F."/>
            <person name="Sullivan S.A."/>
            <person name="Zhou L."/>
            <person name="Davidsen T.M."/>
            <person name="Wu M."/>
            <person name="Huston A.L."/>
            <person name="Lewis M."/>
            <person name="Weaver B."/>
            <person name="Weidman J.F."/>
            <person name="Khouri H."/>
            <person name="Utterback T.R."/>
            <person name="Feldblyum T.V."/>
            <person name="Fraser C.M."/>
        </authorList>
    </citation>
    <scope>NUCLEOTIDE SEQUENCE [LARGE SCALE GENOMIC DNA]</scope>
    <source>
        <strain>34H / ATCC BAA-681</strain>
    </source>
</reference>
<keyword id="KW-0067">ATP-binding</keyword>
<keyword id="KW-0315">Glutamine amidotransferase</keyword>
<keyword id="KW-0332">GMP biosynthesis</keyword>
<keyword id="KW-0436">Ligase</keyword>
<keyword id="KW-0547">Nucleotide-binding</keyword>
<keyword id="KW-0658">Purine biosynthesis</keyword>